<gene>
    <name type="primary">SWR1</name>
    <name type="ORF">UMAG_05485</name>
</gene>
<name>SWR1_MYCMD</name>
<dbReference type="EC" id="3.6.4.12"/>
<dbReference type="EMBL" id="CM003157">
    <property type="protein sequence ID" value="KIS66492.1"/>
    <property type="molecule type" value="Genomic_DNA"/>
</dbReference>
<dbReference type="RefSeq" id="XP_011391816.1">
    <property type="nucleotide sequence ID" value="XM_011393514.1"/>
</dbReference>
<dbReference type="SMR" id="Q4P328"/>
<dbReference type="FunCoup" id="Q4P328">
    <property type="interactions" value="401"/>
</dbReference>
<dbReference type="STRING" id="237631.Q4P328"/>
<dbReference type="EnsemblFungi" id="KIS66492">
    <property type="protein sequence ID" value="KIS66492"/>
    <property type="gene ID" value="UMAG_05485"/>
</dbReference>
<dbReference type="GeneID" id="23565365"/>
<dbReference type="KEGG" id="uma:UMAG_05485"/>
<dbReference type="VEuPathDB" id="FungiDB:UMAG_05485"/>
<dbReference type="eggNOG" id="KOG0391">
    <property type="taxonomic scope" value="Eukaryota"/>
</dbReference>
<dbReference type="HOGENOM" id="CLU_000315_24_3_1"/>
<dbReference type="InParanoid" id="Q4P328"/>
<dbReference type="OMA" id="AFQQWFG"/>
<dbReference type="OrthoDB" id="372624at2759"/>
<dbReference type="Proteomes" id="UP000000561">
    <property type="component" value="Chromosome 18"/>
</dbReference>
<dbReference type="GO" id="GO:0000812">
    <property type="term" value="C:Swr1 complex"/>
    <property type="evidence" value="ECO:0000318"/>
    <property type="project" value="GO_Central"/>
</dbReference>
<dbReference type="GO" id="GO:0005524">
    <property type="term" value="F:ATP binding"/>
    <property type="evidence" value="ECO:0007669"/>
    <property type="project" value="UniProtKB-KW"/>
</dbReference>
<dbReference type="GO" id="GO:0016887">
    <property type="term" value="F:ATP hydrolysis activity"/>
    <property type="evidence" value="ECO:0000318"/>
    <property type="project" value="GO_Central"/>
</dbReference>
<dbReference type="GO" id="GO:0003677">
    <property type="term" value="F:DNA binding"/>
    <property type="evidence" value="ECO:0007669"/>
    <property type="project" value="UniProtKB-KW"/>
</dbReference>
<dbReference type="GO" id="GO:0004386">
    <property type="term" value="F:helicase activity"/>
    <property type="evidence" value="ECO:0007669"/>
    <property type="project" value="UniProtKB-KW"/>
</dbReference>
<dbReference type="GO" id="GO:0042393">
    <property type="term" value="F:histone binding"/>
    <property type="evidence" value="ECO:0000318"/>
    <property type="project" value="GO_Central"/>
</dbReference>
<dbReference type="GO" id="GO:0006338">
    <property type="term" value="P:chromatin remodeling"/>
    <property type="evidence" value="ECO:0000318"/>
    <property type="project" value="GO_Central"/>
</dbReference>
<dbReference type="CDD" id="cd18003">
    <property type="entry name" value="DEXQc_SRCAP"/>
    <property type="match status" value="1"/>
</dbReference>
<dbReference type="CDD" id="cd18793">
    <property type="entry name" value="SF2_C_SNF"/>
    <property type="match status" value="1"/>
</dbReference>
<dbReference type="FunFam" id="3.40.50.10810:FF:000005">
    <property type="entry name" value="Photoperiod-independent early flowering 1"/>
    <property type="match status" value="1"/>
</dbReference>
<dbReference type="FunFam" id="1.20.120.850:FF:000009">
    <property type="entry name" value="SNF2 family helicase/ATPase (Swr1)"/>
    <property type="match status" value="1"/>
</dbReference>
<dbReference type="Gene3D" id="3.40.50.300">
    <property type="entry name" value="P-loop containing nucleotide triphosphate hydrolases"/>
    <property type="match status" value="1"/>
</dbReference>
<dbReference type="Gene3D" id="1.20.120.850">
    <property type="entry name" value="SWI2/SNF2 ATPases, N-terminal domain"/>
    <property type="match status" value="1"/>
</dbReference>
<dbReference type="Gene3D" id="3.40.50.10810">
    <property type="entry name" value="Tandem AAA-ATPase domain"/>
    <property type="match status" value="1"/>
</dbReference>
<dbReference type="InterPro" id="IPR014001">
    <property type="entry name" value="Helicase_ATP-bd"/>
</dbReference>
<dbReference type="InterPro" id="IPR001650">
    <property type="entry name" value="Helicase_C-like"/>
</dbReference>
<dbReference type="InterPro" id="IPR014012">
    <property type="entry name" value="HSA_dom"/>
</dbReference>
<dbReference type="InterPro" id="IPR050520">
    <property type="entry name" value="INO80/SWR1_helicase"/>
</dbReference>
<dbReference type="InterPro" id="IPR027417">
    <property type="entry name" value="P-loop_NTPase"/>
</dbReference>
<dbReference type="InterPro" id="IPR038718">
    <property type="entry name" value="SNF2-like_sf"/>
</dbReference>
<dbReference type="InterPro" id="IPR049730">
    <property type="entry name" value="SNF2/RAD54-like_C"/>
</dbReference>
<dbReference type="InterPro" id="IPR000330">
    <property type="entry name" value="SNF2_N"/>
</dbReference>
<dbReference type="PANTHER" id="PTHR45685:SF1">
    <property type="entry name" value="HELICASE SRCAP"/>
    <property type="match status" value="1"/>
</dbReference>
<dbReference type="PANTHER" id="PTHR45685">
    <property type="entry name" value="HELICASE SRCAP-RELATED"/>
    <property type="match status" value="1"/>
</dbReference>
<dbReference type="Pfam" id="PF00271">
    <property type="entry name" value="Helicase_C"/>
    <property type="match status" value="1"/>
</dbReference>
<dbReference type="Pfam" id="PF07529">
    <property type="entry name" value="HSA"/>
    <property type="match status" value="1"/>
</dbReference>
<dbReference type="Pfam" id="PF00176">
    <property type="entry name" value="SNF2-rel_dom"/>
    <property type="match status" value="1"/>
</dbReference>
<dbReference type="SMART" id="SM00487">
    <property type="entry name" value="DEXDc"/>
    <property type="match status" value="1"/>
</dbReference>
<dbReference type="SMART" id="SM00490">
    <property type="entry name" value="HELICc"/>
    <property type="match status" value="1"/>
</dbReference>
<dbReference type="SMART" id="SM00573">
    <property type="entry name" value="HSA"/>
    <property type="match status" value="1"/>
</dbReference>
<dbReference type="SUPFAM" id="SSF52540">
    <property type="entry name" value="P-loop containing nucleoside triphosphate hydrolases"/>
    <property type="match status" value="2"/>
</dbReference>
<dbReference type="PROSITE" id="PS51192">
    <property type="entry name" value="HELICASE_ATP_BIND_1"/>
    <property type="match status" value="1"/>
</dbReference>
<dbReference type="PROSITE" id="PS51194">
    <property type="entry name" value="HELICASE_CTER"/>
    <property type="match status" value="1"/>
</dbReference>
<dbReference type="PROSITE" id="PS51204">
    <property type="entry name" value="HSA"/>
    <property type="match status" value="1"/>
</dbReference>
<protein>
    <recommendedName>
        <fullName>Helicase SWR1</fullName>
        <ecNumber>3.6.4.12</ecNumber>
    </recommendedName>
</protein>
<evidence type="ECO:0000250" key="1"/>
<evidence type="ECO:0000255" key="2"/>
<evidence type="ECO:0000255" key="3">
    <source>
        <dbReference type="PROSITE-ProRule" id="PRU00541"/>
    </source>
</evidence>
<evidence type="ECO:0000255" key="4">
    <source>
        <dbReference type="PROSITE-ProRule" id="PRU00542"/>
    </source>
</evidence>
<evidence type="ECO:0000255" key="5">
    <source>
        <dbReference type="PROSITE-ProRule" id="PRU00549"/>
    </source>
</evidence>
<evidence type="ECO:0000256" key="6">
    <source>
        <dbReference type="SAM" id="MobiDB-lite"/>
    </source>
</evidence>
<evidence type="ECO:0000305" key="7"/>
<feature type="chain" id="PRO_0000074373" description="Helicase SWR1">
    <location>
        <begin position="1"/>
        <end position="1830"/>
    </location>
</feature>
<feature type="domain" description="HSA" evidence="5">
    <location>
        <begin position="556"/>
        <end position="628"/>
    </location>
</feature>
<feature type="domain" description="Helicase ATP-binding" evidence="3">
    <location>
        <begin position="1002"/>
        <end position="1167"/>
    </location>
</feature>
<feature type="domain" description="Helicase C-terminal" evidence="4">
    <location>
        <begin position="1537"/>
        <end position="1692"/>
    </location>
</feature>
<feature type="region of interest" description="Disordered" evidence="6">
    <location>
        <begin position="1"/>
        <end position="204"/>
    </location>
</feature>
<feature type="region of interest" description="Disordered" evidence="6">
    <location>
        <begin position="329"/>
        <end position="465"/>
    </location>
</feature>
<feature type="region of interest" description="Disordered" evidence="6">
    <location>
        <begin position="681"/>
        <end position="921"/>
    </location>
</feature>
<feature type="region of interest" description="Disordered" evidence="6">
    <location>
        <begin position="940"/>
        <end position="974"/>
    </location>
</feature>
<feature type="region of interest" description="Disordered" evidence="6">
    <location>
        <begin position="1754"/>
        <end position="1814"/>
    </location>
</feature>
<feature type="coiled-coil region" evidence="2">
    <location>
        <begin position="602"/>
        <end position="679"/>
    </location>
</feature>
<feature type="short sequence motif" description="DEAH box">
    <location>
        <begin position="1118"/>
        <end position="1121"/>
    </location>
</feature>
<feature type="compositionally biased region" description="Polar residues" evidence="6">
    <location>
        <begin position="16"/>
        <end position="42"/>
    </location>
</feature>
<feature type="compositionally biased region" description="Polar residues" evidence="6">
    <location>
        <begin position="57"/>
        <end position="70"/>
    </location>
</feature>
<feature type="compositionally biased region" description="Polar residues" evidence="6">
    <location>
        <begin position="98"/>
        <end position="108"/>
    </location>
</feature>
<feature type="compositionally biased region" description="Polar residues" evidence="6">
    <location>
        <begin position="117"/>
        <end position="127"/>
    </location>
</feature>
<feature type="compositionally biased region" description="Basic and acidic residues" evidence="6">
    <location>
        <begin position="167"/>
        <end position="176"/>
    </location>
</feature>
<feature type="compositionally biased region" description="Low complexity" evidence="6">
    <location>
        <begin position="177"/>
        <end position="186"/>
    </location>
</feature>
<feature type="compositionally biased region" description="Basic and acidic residues" evidence="6">
    <location>
        <begin position="352"/>
        <end position="365"/>
    </location>
</feature>
<feature type="compositionally biased region" description="Acidic residues" evidence="6">
    <location>
        <begin position="393"/>
        <end position="407"/>
    </location>
</feature>
<feature type="compositionally biased region" description="Basic and acidic residues" evidence="6">
    <location>
        <begin position="414"/>
        <end position="434"/>
    </location>
</feature>
<feature type="compositionally biased region" description="Acidic residues" evidence="6">
    <location>
        <begin position="711"/>
        <end position="720"/>
    </location>
</feature>
<feature type="compositionally biased region" description="Basic and acidic residues" evidence="6">
    <location>
        <begin position="749"/>
        <end position="763"/>
    </location>
</feature>
<feature type="compositionally biased region" description="Basic residues" evidence="6">
    <location>
        <begin position="783"/>
        <end position="794"/>
    </location>
</feature>
<feature type="compositionally biased region" description="Acidic residues" evidence="6">
    <location>
        <begin position="804"/>
        <end position="821"/>
    </location>
</feature>
<feature type="compositionally biased region" description="Acidic residues" evidence="6">
    <location>
        <begin position="828"/>
        <end position="837"/>
    </location>
</feature>
<feature type="compositionally biased region" description="Acidic residues" evidence="6">
    <location>
        <begin position="861"/>
        <end position="881"/>
    </location>
</feature>
<feature type="compositionally biased region" description="Polar residues" evidence="6">
    <location>
        <begin position="1759"/>
        <end position="1769"/>
    </location>
</feature>
<feature type="compositionally biased region" description="Basic and acidic residues" evidence="6">
    <location>
        <begin position="1790"/>
        <end position="1804"/>
    </location>
</feature>
<feature type="binding site" evidence="3">
    <location>
        <begin position="1015"/>
        <end position="1022"/>
    </location>
    <ligand>
        <name>ATP</name>
        <dbReference type="ChEBI" id="CHEBI:30616"/>
    </ligand>
</feature>
<accession>Q4P328</accession>
<accession>A0A0D1BX16</accession>
<proteinExistence type="inferred from homology"/>
<sequence length="1830" mass="206325">MSPGDSALDYAKRQAGNVSSQAPSRPSSENDANGTVSTSNEHPSNEAGPSRPRSMGSERSASPQQGTTPKVPTKRRRLNAELAFSSPGPAFQVEQHGSEAQSDSNDSSGRARRPRRSTTLTKSGSNESQDRRSSAHIPKRKEEAGESRNLAESVPKNKLKLNNGKARASDEVELRESSLSLVLPSRSRSRSKSVVKLEPDQDSAFPQEVATPTLQPTRPKPQITPLTALNPQAALSEILARRRSERIALAQSDLEDVHDGHDMLVRELFHLTKFVTMVGYDPDVARTDQSDVFTTFKHAHDLRFSLDDSGSGAEASTAARVTRRRVNARLESLSLKRPDPPSTPSTPSFSKVKVDDDKKSAPEGRRNRRFSSVTGAQPRVNGAHTLETGHSDDTDDSSEEEDSEGSDLDAYSPDGREKGDAKDYNASRKGDAKRARLSSTPHKRHRAKVQDASSNAPVKRTGPRKSKALDELDAFILRQQPRPLPDHPPPLHILAPHQIPAHRRFGGDLDALYESFNMLQDDEGGLEDDDLETYIKLDQRWRAGLPIHPEAGSTTRHAVQKVPRNKSHHDHLLESVTSSYSQMRQYAKLKQQNSRKVARMIAQHWERQLGTSEREKKAEERRLRALAKWTLREVLKQWRLAVNVVRARKAAAEKAEKEKSDKEQLNAILEQSTAMLKKQHEVMTRADSLDDSDDEGSDRTNYGSDGSAESEISDIDDDDNQLIQIQDELPSVSPEQSLDMLTPVPEEADGSKDRVSNTTDHEAATANGDPTVVVESESQPSRRPQRRTARTKTFKARDSKLDADDIEFNDAGNDDEQEDAELERQMLEEDEEDDSEDAGLAADANIPIEELLKRYGYGQEADQDAEDSDAGEDAVSNDDSLENSATKDGSEDVAAVASIKIQEDAEVEEERPVQEDSMPDEAMDLEDDAVSTALNRPSDALLVDDHSDAESAATSGRRSSRRSMTRASSIVSSDRHATRLRQPFLLRGQLRPYQQIGFEWLCSLYANGVNGILADEMGLGKTIQTISLLAHLACDKGVWGPHLVVAPTSVMLNWEVEFKKFLPGFKILSYYGNQKERKEKRIGWNTENSFNVCITSYQLVLADQHIFRRKPWVYLVLDEAHHIKNFRSQRWQTLLGFNSQRRLLLTGTPLQNNLMDLWSLMYFLMPNGATELPGGGAFANMKDFQDWFSNPLDKAIEGGTSMNDETRAMVQKLHAVLRPYLLRRLKSEVEKELPSKYEHVITCRLSKRQRFLYNDFMSRAKTRESLASGNYLSIINCLMQLRKVCNHPDLFEVRPIVTSFAMSRSVVADYEIKDLLVRRRLLQENVWEKVDLDVTNLRITDGEEHLTAIESRDLRRLNAAKKLPHFREAVPEPRELDTWTLEGFERSREQRKLVDRMEKWKHMAYLNQYRCTKRPIYGSGLIKMLTEAGEAARLEPLEQHESDRRGFLTRCDSVLRIVQSRSTRRENMQALIDRFAFVTPRAVAVDMPRWALPGLEAHQRPDMVKREFDTVHPVAVKLHIAFPDASLLQYDCGKLQQLDILMRRLKEGGHRILIFTQMTRVLDILESFLNYHGYRYLRLDGATKVESRQALTEQFNRDARISAFILSTRSGGLGINLTGADTVLFYDLDWNAAIEAQCMDRAHRIGQTRDVHIYRFVTEHTIEENMLRKANQKRLLDNVVIQQGEFNTETLAKRLDWTDMLDESGKIGDVEVVVADQGVGARDVESAFLQAEDDEDRQAALRARHEMFIDDADFEEHQPSTSRPNTASATPLAHTASDGARPDNGAHAADALDAHEIENEHQEQEQEQEQAASIDDYMLAFVESDWPFFA</sequence>
<organism>
    <name type="scientific">Mycosarcoma maydis</name>
    <name type="common">Corn smut fungus</name>
    <name type="synonym">Ustilago maydis</name>
    <dbReference type="NCBI Taxonomy" id="5270"/>
    <lineage>
        <taxon>Eukaryota</taxon>
        <taxon>Fungi</taxon>
        <taxon>Dikarya</taxon>
        <taxon>Basidiomycota</taxon>
        <taxon>Ustilaginomycotina</taxon>
        <taxon>Ustilaginomycetes</taxon>
        <taxon>Ustilaginales</taxon>
        <taxon>Ustilaginaceae</taxon>
        <taxon>Mycosarcoma</taxon>
    </lineage>
</organism>
<reference key="1">
    <citation type="journal article" date="2006" name="Nature">
        <title>Insights from the genome of the biotrophic fungal plant pathogen Ustilago maydis.</title>
        <authorList>
            <person name="Kaemper J."/>
            <person name="Kahmann R."/>
            <person name="Boelker M."/>
            <person name="Ma L.-J."/>
            <person name="Brefort T."/>
            <person name="Saville B.J."/>
            <person name="Banuett F."/>
            <person name="Kronstad J.W."/>
            <person name="Gold S.E."/>
            <person name="Mueller O."/>
            <person name="Perlin M.H."/>
            <person name="Woesten H.A.B."/>
            <person name="de Vries R."/>
            <person name="Ruiz-Herrera J."/>
            <person name="Reynaga-Pena C.G."/>
            <person name="Snetselaar K."/>
            <person name="McCann M."/>
            <person name="Perez-Martin J."/>
            <person name="Feldbruegge M."/>
            <person name="Basse C.W."/>
            <person name="Steinberg G."/>
            <person name="Ibeas J.I."/>
            <person name="Holloman W."/>
            <person name="Guzman P."/>
            <person name="Farman M.L."/>
            <person name="Stajich J.E."/>
            <person name="Sentandreu R."/>
            <person name="Gonzalez-Prieto J.M."/>
            <person name="Kennell J.C."/>
            <person name="Molina L."/>
            <person name="Schirawski J."/>
            <person name="Mendoza-Mendoza A."/>
            <person name="Greilinger D."/>
            <person name="Muench K."/>
            <person name="Roessel N."/>
            <person name="Scherer M."/>
            <person name="Vranes M."/>
            <person name="Ladendorf O."/>
            <person name="Vincon V."/>
            <person name="Fuchs U."/>
            <person name="Sandrock B."/>
            <person name="Meng S."/>
            <person name="Ho E.C.H."/>
            <person name="Cahill M.J."/>
            <person name="Boyce K.J."/>
            <person name="Klose J."/>
            <person name="Klosterman S.J."/>
            <person name="Deelstra H.J."/>
            <person name="Ortiz-Castellanos L."/>
            <person name="Li W."/>
            <person name="Sanchez-Alonso P."/>
            <person name="Schreier P.H."/>
            <person name="Haeuser-Hahn I."/>
            <person name="Vaupel M."/>
            <person name="Koopmann E."/>
            <person name="Friedrich G."/>
            <person name="Voss H."/>
            <person name="Schlueter T."/>
            <person name="Margolis J."/>
            <person name="Platt D."/>
            <person name="Swimmer C."/>
            <person name="Gnirke A."/>
            <person name="Chen F."/>
            <person name="Vysotskaia V."/>
            <person name="Mannhaupt G."/>
            <person name="Gueldener U."/>
            <person name="Muensterkoetter M."/>
            <person name="Haase D."/>
            <person name="Oesterheld M."/>
            <person name="Mewes H.-W."/>
            <person name="Mauceli E.W."/>
            <person name="DeCaprio D."/>
            <person name="Wade C.M."/>
            <person name="Butler J."/>
            <person name="Young S.K."/>
            <person name="Jaffe D.B."/>
            <person name="Calvo S.E."/>
            <person name="Nusbaum C."/>
            <person name="Galagan J.E."/>
            <person name="Birren B.W."/>
        </authorList>
    </citation>
    <scope>NUCLEOTIDE SEQUENCE [LARGE SCALE GENOMIC DNA]</scope>
    <source>
        <strain>DSM 14603 / FGSC 9021 / UM521</strain>
    </source>
</reference>
<reference key="2">
    <citation type="submission" date="2014-09" db="EMBL/GenBank/DDBJ databases">
        <authorList>
            <person name="Gueldener U."/>
            <person name="Muensterkoetter M."/>
            <person name="Walter M.C."/>
            <person name="Mannhaupt G."/>
            <person name="Kahmann R."/>
        </authorList>
    </citation>
    <scope>GENOME REANNOTATION</scope>
    <source>
        <strain>DSM 14603 / FGSC 9021 / UM521</strain>
    </source>
</reference>
<keyword id="KW-0010">Activator</keyword>
<keyword id="KW-0067">ATP-binding</keyword>
<keyword id="KW-0156">Chromatin regulator</keyword>
<keyword id="KW-0175">Coiled coil</keyword>
<keyword id="KW-0238">DNA-binding</keyword>
<keyword id="KW-0347">Helicase</keyword>
<keyword id="KW-0378">Hydrolase</keyword>
<keyword id="KW-0547">Nucleotide-binding</keyword>
<keyword id="KW-0539">Nucleus</keyword>
<keyword id="KW-1185">Reference proteome</keyword>
<keyword id="KW-0804">Transcription</keyword>
<keyword id="KW-0805">Transcription regulation</keyword>
<comment type="function">
    <text evidence="1">Catalytic component of the SWR1 complex which mediates the ATP-dependent exchange of histone H2A for the H2A variant HZT1 leading to transcriptional regulation of selected genes by chromatin remodeling.</text>
</comment>
<comment type="catalytic activity">
    <reaction>
        <text>ATP + H2O = ADP + phosphate + H(+)</text>
        <dbReference type="Rhea" id="RHEA:13065"/>
        <dbReference type="ChEBI" id="CHEBI:15377"/>
        <dbReference type="ChEBI" id="CHEBI:15378"/>
        <dbReference type="ChEBI" id="CHEBI:30616"/>
        <dbReference type="ChEBI" id="CHEBI:43474"/>
        <dbReference type="ChEBI" id="CHEBI:456216"/>
        <dbReference type="EC" id="3.6.4.12"/>
    </reaction>
</comment>
<comment type="subunit">
    <text evidence="1">Component of the SWR1 chromatin-remodeling complex.</text>
</comment>
<comment type="subcellular location">
    <subcellularLocation>
        <location evidence="5">Nucleus</location>
    </subcellularLocation>
</comment>
<comment type="similarity">
    <text evidence="7">Belongs to the SNF2/RAD54 helicase family. SWR1 subfamily.</text>
</comment>